<accession>A2SE11</accession>
<keyword id="KW-0028">Amino-acid biosynthesis</keyword>
<keyword id="KW-0067">ATP-binding</keyword>
<keyword id="KW-0963">Cytoplasm</keyword>
<keyword id="KW-0368">Histidine biosynthesis</keyword>
<keyword id="KW-0378">Hydrolase</keyword>
<keyword id="KW-0547">Nucleotide-binding</keyword>
<keyword id="KW-1185">Reference proteome</keyword>
<proteinExistence type="inferred from homology"/>
<comment type="catalytic activity">
    <reaction evidence="1">
        <text>1-(5-phospho-beta-D-ribosyl)-ATP + H2O = 1-(5-phospho-beta-D-ribosyl)-5'-AMP + diphosphate + H(+)</text>
        <dbReference type="Rhea" id="RHEA:22828"/>
        <dbReference type="ChEBI" id="CHEBI:15377"/>
        <dbReference type="ChEBI" id="CHEBI:15378"/>
        <dbReference type="ChEBI" id="CHEBI:33019"/>
        <dbReference type="ChEBI" id="CHEBI:59457"/>
        <dbReference type="ChEBI" id="CHEBI:73183"/>
        <dbReference type="EC" id="3.6.1.31"/>
    </reaction>
</comment>
<comment type="pathway">
    <text evidence="1">Amino-acid biosynthesis; L-histidine biosynthesis; L-histidine from 5-phospho-alpha-D-ribose 1-diphosphate: step 2/9.</text>
</comment>
<comment type="subcellular location">
    <subcellularLocation>
        <location evidence="1">Cytoplasm</location>
    </subcellularLocation>
</comment>
<comment type="similarity">
    <text evidence="1">Belongs to the PRA-PH family.</text>
</comment>
<organism>
    <name type="scientific">Methylibium petroleiphilum (strain ATCC BAA-1232 / LMG 22953 / PM1)</name>
    <dbReference type="NCBI Taxonomy" id="420662"/>
    <lineage>
        <taxon>Bacteria</taxon>
        <taxon>Pseudomonadati</taxon>
        <taxon>Pseudomonadota</taxon>
        <taxon>Betaproteobacteria</taxon>
        <taxon>Burkholderiales</taxon>
        <taxon>Sphaerotilaceae</taxon>
        <taxon>Methylibium</taxon>
    </lineage>
</organism>
<gene>
    <name evidence="1" type="primary">hisE</name>
    <name type="ordered locus">Mpe_A0838</name>
</gene>
<feature type="chain" id="PRO_0000319653" description="Phosphoribosyl-ATP pyrophosphatase">
    <location>
        <begin position="1"/>
        <end position="120"/>
    </location>
</feature>
<evidence type="ECO:0000255" key="1">
    <source>
        <dbReference type="HAMAP-Rule" id="MF_01020"/>
    </source>
</evidence>
<sequence length="120" mass="13009">MSGDDTLARLAAVIESRRGGDPEASYVARLFHKGTDAILKKVGEEATEFVMAAKDGDRPKIVAEAADLWFHAMVALAHFGLTPAQVLAELERREGQSGLEEFALRKVRGREAESTKESGP</sequence>
<dbReference type="EC" id="3.6.1.31" evidence="1"/>
<dbReference type="EMBL" id="CP000555">
    <property type="protein sequence ID" value="ABM93800.1"/>
    <property type="molecule type" value="Genomic_DNA"/>
</dbReference>
<dbReference type="RefSeq" id="WP_011828438.1">
    <property type="nucleotide sequence ID" value="NC_008825.1"/>
</dbReference>
<dbReference type="SMR" id="A2SE11"/>
<dbReference type="STRING" id="420662.Mpe_A0838"/>
<dbReference type="KEGG" id="mpt:Mpe_A0838"/>
<dbReference type="eggNOG" id="COG0140">
    <property type="taxonomic scope" value="Bacteria"/>
</dbReference>
<dbReference type="HOGENOM" id="CLU_123337_1_2_4"/>
<dbReference type="UniPathway" id="UPA00031">
    <property type="reaction ID" value="UER00007"/>
</dbReference>
<dbReference type="Proteomes" id="UP000000366">
    <property type="component" value="Chromosome"/>
</dbReference>
<dbReference type="GO" id="GO:0005737">
    <property type="term" value="C:cytoplasm"/>
    <property type="evidence" value="ECO:0007669"/>
    <property type="project" value="UniProtKB-SubCell"/>
</dbReference>
<dbReference type="GO" id="GO:0005524">
    <property type="term" value="F:ATP binding"/>
    <property type="evidence" value="ECO:0007669"/>
    <property type="project" value="UniProtKB-KW"/>
</dbReference>
<dbReference type="GO" id="GO:0004636">
    <property type="term" value="F:phosphoribosyl-ATP diphosphatase activity"/>
    <property type="evidence" value="ECO:0007669"/>
    <property type="project" value="UniProtKB-UniRule"/>
</dbReference>
<dbReference type="GO" id="GO:0000105">
    <property type="term" value="P:L-histidine biosynthetic process"/>
    <property type="evidence" value="ECO:0007669"/>
    <property type="project" value="UniProtKB-UniRule"/>
</dbReference>
<dbReference type="CDD" id="cd11534">
    <property type="entry name" value="NTP-PPase_HisIE_like"/>
    <property type="match status" value="1"/>
</dbReference>
<dbReference type="Gene3D" id="1.10.287.1080">
    <property type="entry name" value="MazG-like"/>
    <property type="match status" value="1"/>
</dbReference>
<dbReference type="HAMAP" id="MF_01020">
    <property type="entry name" value="HisE"/>
    <property type="match status" value="1"/>
</dbReference>
<dbReference type="InterPro" id="IPR008179">
    <property type="entry name" value="HisE"/>
</dbReference>
<dbReference type="InterPro" id="IPR021130">
    <property type="entry name" value="PRib-ATP_PPHydrolase-like"/>
</dbReference>
<dbReference type="NCBIfam" id="TIGR03188">
    <property type="entry name" value="histidine_hisI"/>
    <property type="match status" value="1"/>
</dbReference>
<dbReference type="NCBIfam" id="NF001611">
    <property type="entry name" value="PRK00400.1-3"/>
    <property type="match status" value="1"/>
</dbReference>
<dbReference type="PANTHER" id="PTHR42945">
    <property type="entry name" value="HISTIDINE BIOSYNTHESIS BIFUNCTIONAL PROTEIN"/>
    <property type="match status" value="1"/>
</dbReference>
<dbReference type="PANTHER" id="PTHR42945:SF9">
    <property type="entry name" value="HISTIDINE BIOSYNTHESIS BIFUNCTIONAL PROTEIN HISIE"/>
    <property type="match status" value="1"/>
</dbReference>
<dbReference type="Pfam" id="PF01503">
    <property type="entry name" value="PRA-PH"/>
    <property type="match status" value="1"/>
</dbReference>
<dbReference type="SUPFAM" id="SSF101386">
    <property type="entry name" value="all-alpha NTP pyrophosphatases"/>
    <property type="match status" value="1"/>
</dbReference>
<reference key="1">
    <citation type="journal article" date="2007" name="J. Bacteriol.">
        <title>Whole-genome analysis of the methyl tert-butyl ether-degrading beta-proteobacterium Methylibium petroleiphilum PM1.</title>
        <authorList>
            <person name="Kane S.R."/>
            <person name="Chakicherla A.Y."/>
            <person name="Chain P.S.G."/>
            <person name="Schmidt R."/>
            <person name="Shin M.W."/>
            <person name="Legler T.C."/>
            <person name="Scow K.M."/>
            <person name="Larimer F.W."/>
            <person name="Lucas S.M."/>
            <person name="Richardson P.M."/>
            <person name="Hristova K.R."/>
        </authorList>
    </citation>
    <scope>NUCLEOTIDE SEQUENCE [LARGE SCALE GENOMIC DNA]</scope>
    <source>
        <strain>ATCC BAA-1232 / LMG 22953 / PM1</strain>
    </source>
</reference>
<protein>
    <recommendedName>
        <fullName evidence="1">Phosphoribosyl-ATP pyrophosphatase</fullName>
        <shortName evidence="1">PRA-PH</shortName>
        <ecNumber evidence="1">3.6.1.31</ecNumber>
    </recommendedName>
</protein>
<name>HIS2_METPP</name>